<organism>
    <name type="scientific">Gallus gallus</name>
    <name type="common">Chicken</name>
    <dbReference type="NCBI Taxonomy" id="9031"/>
    <lineage>
        <taxon>Eukaryota</taxon>
        <taxon>Metazoa</taxon>
        <taxon>Chordata</taxon>
        <taxon>Craniata</taxon>
        <taxon>Vertebrata</taxon>
        <taxon>Euteleostomi</taxon>
        <taxon>Archelosauria</taxon>
        <taxon>Archosauria</taxon>
        <taxon>Dinosauria</taxon>
        <taxon>Saurischia</taxon>
        <taxon>Theropoda</taxon>
        <taxon>Coelurosauria</taxon>
        <taxon>Aves</taxon>
        <taxon>Neognathae</taxon>
        <taxon>Galloanserae</taxon>
        <taxon>Galliformes</taxon>
        <taxon>Phasianidae</taxon>
        <taxon>Phasianinae</taxon>
        <taxon>Gallus</taxon>
    </lineage>
</organism>
<name>GSTA2_CHICK</name>
<feature type="chain" id="PRO_0000185802" description="Glutathione S-transferase">
    <location>
        <begin position="1"/>
        <end position="222"/>
    </location>
</feature>
<feature type="domain" description="GST N-terminal">
    <location>
        <begin position="3"/>
        <end position="83"/>
    </location>
</feature>
<feature type="domain" description="GST C-terminal">
    <location>
        <begin position="85"/>
        <end position="208"/>
    </location>
</feature>
<feature type="binding site" evidence="3">
    <location>
        <position position="9"/>
    </location>
    <ligand>
        <name>glutathione</name>
        <dbReference type="ChEBI" id="CHEBI:57925"/>
    </ligand>
</feature>
<feature type="binding site" evidence="2">
    <location>
        <position position="45"/>
    </location>
    <ligand>
        <name>glutathione</name>
        <dbReference type="ChEBI" id="CHEBI:57925"/>
    </ligand>
</feature>
<feature type="binding site" evidence="4">
    <location>
        <begin position="54"/>
        <end position="55"/>
    </location>
    <ligand>
        <name>glutathione</name>
        <dbReference type="ChEBI" id="CHEBI:57925"/>
    </ligand>
</feature>
<feature type="binding site" evidence="3">
    <location>
        <begin position="67"/>
        <end position="68"/>
    </location>
    <ligand>
        <name>glutathione</name>
        <dbReference type="ChEBI" id="CHEBI:57925"/>
    </ligand>
</feature>
<comment type="function">
    <text>Conjugation of reduced glutathione to a wide number of exogenous and endogenous hydrophobic electrophiles.</text>
</comment>
<comment type="catalytic activity">
    <reaction>
        <text>RX + glutathione = an S-substituted glutathione + a halide anion + H(+)</text>
        <dbReference type="Rhea" id="RHEA:16437"/>
        <dbReference type="ChEBI" id="CHEBI:15378"/>
        <dbReference type="ChEBI" id="CHEBI:16042"/>
        <dbReference type="ChEBI" id="CHEBI:17792"/>
        <dbReference type="ChEBI" id="CHEBI:57925"/>
        <dbReference type="ChEBI" id="CHEBI:90779"/>
        <dbReference type="EC" id="2.5.1.18"/>
    </reaction>
</comment>
<comment type="subunit">
    <text evidence="1">Homodimer.</text>
</comment>
<comment type="subcellular location">
    <subcellularLocation>
        <location evidence="1">Cytoplasm</location>
    </subcellularLocation>
</comment>
<comment type="similarity">
    <text evidence="5">Belongs to the GST superfamily. Alpha family.</text>
</comment>
<accession>Q08393</accession>
<evidence type="ECO:0000250" key="1"/>
<evidence type="ECO:0000250" key="2">
    <source>
        <dbReference type="UniProtKB" id="P08263"/>
    </source>
</evidence>
<evidence type="ECO:0000250" key="3">
    <source>
        <dbReference type="UniProtKB" id="P13745"/>
    </source>
</evidence>
<evidence type="ECO:0000250" key="4">
    <source>
        <dbReference type="UniProtKB" id="P30711"/>
    </source>
</evidence>
<evidence type="ECO:0000305" key="5"/>
<sequence>MAGKPKLHYTRGRGKMESIRWLLAAAGVEFEEEFIEKKEDLEKLRNDGSLLFQQVPMVEIDGMKMVQSRAILCYIAGKYNLYGKDLKERAWIDMYVEGTTDLMGMIMALPFQAADVKEKNIALITERATTRYFPVYEKALKDHGQDYLVGNKLSWADIHLLEAILMTEELKSDILSAFPLLQAFKGRMSNVPTIKKFLQPGSQRKPPLDEKSIANVRKIFSF</sequence>
<reference key="1">
    <citation type="submission" date="1999-03" db="EMBL/GenBank/DDBJ databases">
        <authorList>
            <person name="Tam M.F."/>
            <person name="Liu L.-F."/>
        </authorList>
    </citation>
    <scope>NUCLEOTIDE SEQUENCE [MRNA]</scope>
    <source>
        <tissue>Liver</tissue>
    </source>
</reference>
<reference key="2">
    <citation type="journal article" date="1993" name="Biochim. Biophys. Acta">
        <title>Nucleotide sequence of class-alpha glutathione S-transferases from chicken liver.</title>
        <authorList>
            <person name="Liu L.-F."/>
            <person name="Wu S.-H."/>
            <person name="Tam M.F."/>
        </authorList>
    </citation>
    <scope>NUCLEOTIDE SEQUENCE [MRNA] OF 30-222</scope>
    <source>
        <tissue>Liver</tissue>
    </source>
</reference>
<proteinExistence type="evidence at transcript level"/>
<dbReference type="EC" id="2.5.1.18"/>
<dbReference type="EMBL" id="L15387">
    <property type="protein sequence ID" value="AAA16573.2"/>
    <property type="molecule type" value="mRNA"/>
</dbReference>
<dbReference type="PIR" id="S43432">
    <property type="entry name" value="S43432"/>
</dbReference>
<dbReference type="RefSeq" id="NP_001001776.1">
    <property type="nucleotide sequence ID" value="NM_001001776.2"/>
</dbReference>
<dbReference type="RefSeq" id="NP_001383520.1">
    <property type="nucleotide sequence ID" value="NM_001396591.1"/>
</dbReference>
<dbReference type="RefSeq" id="NP_001383521.1">
    <property type="nucleotide sequence ID" value="NM_001396592.1"/>
</dbReference>
<dbReference type="RefSeq" id="XP_015140310.1">
    <property type="nucleotide sequence ID" value="XM_015284824.1"/>
</dbReference>
<dbReference type="RefSeq" id="XP_015140311.1">
    <property type="nucleotide sequence ID" value="XM_015284825.1"/>
</dbReference>
<dbReference type="RefSeq" id="XP_046769291.1">
    <property type="nucleotide sequence ID" value="XM_046913335.1"/>
</dbReference>
<dbReference type="RefSeq" id="XP_046794541.1">
    <property type="nucleotide sequence ID" value="XM_046938585.1"/>
</dbReference>
<dbReference type="SMR" id="Q08393"/>
<dbReference type="FunCoup" id="Q08393">
    <property type="interactions" value="46"/>
</dbReference>
<dbReference type="STRING" id="9031.ENSGALP00000026289"/>
<dbReference type="PaxDb" id="9031-ENSGALP00000026289"/>
<dbReference type="Ensembl" id="ENSGALT00010004919.1">
    <property type="protein sequence ID" value="ENSGALP00010002947.1"/>
    <property type="gene ID" value="ENSGALG00010002197.1"/>
</dbReference>
<dbReference type="GeneID" id="414895"/>
<dbReference type="KEGG" id="gga:414895"/>
<dbReference type="CTD" id="2939"/>
<dbReference type="VEuPathDB" id="HostDB:geneid_414895"/>
<dbReference type="eggNOG" id="KOG1695">
    <property type="taxonomic scope" value="Eukaryota"/>
</dbReference>
<dbReference type="GeneTree" id="ENSGT00940000167375"/>
<dbReference type="HOGENOM" id="CLU_039475_4_0_1"/>
<dbReference type="InParanoid" id="Q08393"/>
<dbReference type="OMA" id="DMIMILP"/>
<dbReference type="OrthoDB" id="414243at2759"/>
<dbReference type="PhylomeDB" id="Q08393"/>
<dbReference type="TreeFam" id="TF105321"/>
<dbReference type="PRO" id="PR:Q08393"/>
<dbReference type="Proteomes" id="UP000000539">
    <property type="component" value="Chromosome 3"/>
</dbReference>
<dbReference type="Bgee" id="ENSGALG00000016328">
    <property type="expression patterns" value="Expressed in liver and 13 other cell types or tissues"/>
</dbReference>
<dbReference type="GO" id="GO:0005737">
    <property type="term" value="C:cytoplasm"/>
    <property type="evidence" value="ECO:0007669"/>
    <property type="project" value="UniProtKB-SubCell"/>
</dbReference>
<dbReference type="GO" id="GO:0004364">
    <property type="term" value="F:glutathione transferase activity"/>
    <property type="evidence" value="ECO:0000250"/>
    <property type="project" value="UniProtKB"/>
</dbReference>
<dbReference type="GO" id="GO:0006749">
    <property type="term" value="P:glutathione metabolic process"/>
    <property type="evidence" value="ECO:0000250"/>
    <property type="project" value="UniProtKB"/>
</dbReference>
<dbReference type="GO" id="GO:0006805">
    <property type="term" value="P:xenobiotic metabolic process"/>
    <property type="evidence" value="ECO:0000318"/>
    <property type="project" value="GO_Central"/>
</dbReference>
<dbReference type="CDD" id="cd03208">
    <property type="entry name" value="GST_C_Alpha"/>
    <property type="match status" value="1"/>
</dbReference>
<dbReference type="FunFam" id="1.20.1050.10:FF:000005">
    <property type="entry name" value="Glutathione S-transferase A1"/>
    <property type="match status" value="1"/>
</dbReference>
<dbReference type="Gene3D" id="1.20.1050.10">
    <property type="match status" value="1"/>
</dbReference>
<dbReference type="Gene3D" id="3.40.30.10">
    <property type="entry name" value="Glutaredoxin"/>
    <property type="match status" value="1"/>
</dbReference>
<dbReference type="InterPro" id="IPR010987">
    <property type="entry name" value="Glutathione-S-Trfase_C-like"/>
</dbReference>
<dbReference type="InterPro" id="IPR036282">
    <property type="entry name" value="Glutathione-S-Trfase_C_sf"/>
</dbReference>
<dbReference type="InterPro" id="IPR040079">
    <property type="entry name" value="Glutathione_S-Trfase"/>
</dbReference>
<dbReference type="InterPro" id="IPR004045">
    <property type="entry name" value="Glutathione_S-Trfase_N"/>
</dbReference>
<dbReference type="InterPro" id="IPR003080">
    <property type="entry name" value="GST_alpha"/>
</dbReference>
<dbReference type="InterPro" id="IPR004046">
    <property type="entry name" value="GST_C"/>
</dbReference>
<dbReference type="InterPro" id="IPR050213">
    <property type="entry name" value="GST_superfamily"/>
</dbReference>
<dbReference type="InterPro" id="IPR036249">
    <property type="entry name" value="Thioredoxin-like_sf"/>
</dbReference>
<dbReference type="PANTHER" id="PTHR11571">
    <property type="entry name" value="GLUTATHIONE S-TRANSFERASE"/>
    <property type="match status" value="1"/>
</dbReference>
<dbReference type="PANTHER" id="PTHR11571:SF107">
    <property type="entry name" value="GLUTATHIONE S-TRANSFERASE A1"/>
    <property type="match status" value="1"/>
</dbReference>
<dbReference type="Pfam" id="PF14497">
    <property type="entry name" value="GST_C_3"/>
    <property type="match status" value="1"/>
</dbReference>
<dbReference type="Pfam" id="PF02798">
    <property type="entry name" value="GST_N"/>
    <property type="match status" value="1"/>
</dbReference>
<dbReference type="PRINTS" id="PR01266">
    <property type="entry name" value="GSTRNSFRASEA"/>
</dbReference>
<dbReference type="SFLD" id="SFLDG01205">
    <property type="entry name" value="AMPS.1"/>
    <property type="match status" value="1"/>
</dbReference>
<dbReference type="SFLD" id="SFLDS00019">
    <property type="entry name" value="Glutathione_Transferase_(cytos"/>
    <property type="match status" value="1"/>
</dbReference>
<dbReference type="SUPFAM" id="SSF47616">
    <property type="entry name" value="GST C-terminal domain-like"/>
    <property type="match status" value="1"/>
</dbReference>
<dbReference type="SUPFAM" id="SSF52833">
    <property type="entry name" value="Thioredoxin-like"/>
    <property type="match status" value="1"/>
</dbReference>
<dbReference type="PROSITE" id="PS50405">
    <property type="entry name" value="GST_CTER"/>
    <property type="match status" value="1"/>
</dbReference>
<dbReference type="PROSITE" id="PS50404">
    <property type="entry name" value="GST_NTER"/>
    <property type="match status" value="1"/>
</dbReference>
<keyword id="KW-0963">Cytoplasm</keyword>
<keyword id="KW-1185">Reference proteome</keyword>
<keyword id="KW-0808">Transferase</keyword>
<protein>
    <recommendedName>
        <fullName>Glutathione S-transferase</fullName>
        <ecNumber>2.5.1.18</ecNumber>
    </recommendedName>
    <alternativeName>
        <fullName>Class-alpha</fullName>
    </alternativeName>
</protein>